<comment type="function">
    <text evidence="1">A key translational regulator that binds mRNA to regulate translation initiation and/or mRNA stability. Mediates global changes in gene expression, shifting from rapid growth to stress survival by linking envelope stress, the stringent response and the catabolite repression systems. Usually binds in the 5'-UTR; binding at or near the Shine-Dalgarno sequence prevents ribosome-binding, repressing translation, binding elsewhere in the 5'-UTR can activate translation and/or stabilize the mRNA. Its function is antagonized by small RNA(s).</text>
</comment>
<comment type="subunit">
    <text evidence="1">Homodimer; the beta-strands of each monomer intercalate to form a hydrophobic core, while the alpha-helices form wings that extend away from the core.</text>
</comment>
<comment type="subcellular location">
    <subcellularLocation>
        <location evidence="1">Cytoplasm</location>
    </subcellularLocation>
</comment>
<comment type="similarity">
    <text evidence="1">Belongs to the CsrA/RsmA family.</text>
</comment>
<sequence length="61" mass="6856">MLILTRRVGETLMIGDEVTVTVLGVKGNQVRIGVNAPKEVSVHREEIYQRIQAEKSQQSSY</sequence>
<organism>
    <name type="scientific">Shigella boydii serotype 4 (strain Sb227)</name>
    <dbReference type="NCBI Taxonomy" id="300268"/>
    <lineage>
        <taxon>Bacteria</taxon>
        <taxon>Pseudomonadati</taxon>
        <taxon>Pseudomonadota</taxon>
        <taxon>Gammaproteobacteria</taxon>
        <taxon>Enterobacterales</taxon>
        <taxon>Enterobacteriaceae</taxon>
        <taxon>Shigella</taxon>
    </lineage>
</organism>
<reference key="1">
    <citation type="journal article" date="2005" name="Nucleic Acids Res.">
        <title>Genome dynamics and diversity of Shigella species, the etiologic agents of bacillary dysentery.</title>
        <authorList>
            <person name="Yang F."/>
            <person name="Yang J."/>
            <person name="Zhang X."/>
            <person name="Chen L."/>
            <person name="Jiang Y."/>
            <person name="Yan Y."/>
            <person name="Tang X."/>
            <person name="Wang J."/>
            <person name="Xiong Z."/>
            <person name="Dong J."/>
            <person name="Xue Y."/>
            <person name="Zhu Y."/>
            <person name="Xu X."/>
            <person name="Sun L."/>
            <person name="Chen S."/>
            <person name="Nie H."/>
            <person name="Peng J."/>
            <person name="Xu J."/>
            <person name="Wang Y."/>
            <person name="Yuan Z."/>
            <person name="Wen Y."/>
            <person name="Yao Z."/>
            <person name="Shen Y."/>
            <person name="Qiang B."/>
            <person name="Hou Y."/>
            <person name="Yu J."/>
            <person name="Jin Q."/>
        </authorList>
    </citation>
    <scope>NUCLEOTIDE SEQUENCE [LARGE SCALE GENOMIC DNA]</scope>
    <source>
        <strain>Sb227</strain>
    </source>
</reference>
<feature type="chain" id="PRO_1000023426" description="Translational regulator CsrA">
    <location>
        <begin position="1"/>
        <end position="61"/>
    </location>
</feature>
<evidence type="ECO:0000255" key="1">
    <source>
        <dbReference type="HAMAP-Rule" id="MF_00167"/>
    </source>
</evidence>
<proteinExistence type="inferred from homology"/>
<dbReference type="EMBL" id="CP000036">
    <property type="protein sequence ID" value="ABB67347.1"/>
    <property type="molecule type" value="Genomic_DNA"/>
</dbReference>
<dbReference type="RefSeq" id="WP_000906486.1">
    <property type="nucleotide sequence ID" value="NC_007613.1"/>
</dbReference>
<dbReference type="SMR" id="Q31X61"/>
<dbReference type="GeneID" id="98389839"/>
<dbReference type="KEGG" id="sbo:SBO_2822"/>
<dbReference type="HOGENOM" id="CLU_164837_2_1_6"/>
<dbReference type="Proteomes" id="UP000007067">
    <property type="component" value="Chromosome"/>
</dbReference>
<dbReference type="GO" id="GO:0005829">
    <property type="term" value="C:cytosol"/>
    <property type="evidence" value="ECO:0007669"/>
    <property type="project" value="TreeGrafter"/>
</dbReference>
<dbReference type="GO" id="GO:0048027">
    <property type="term" value="F:mRNA 5'-UTR binding"/>
    <property type="evidence" value="ECO:0007669"/>
    <property type="project" value="UniProtKB-UniRule"/>
</dbReference>
<dbReference type="GO" id="GO:0006402">
    <property type="term" value="P:mRNA catabolic process"/>
    <property type="evidence" value="ECO:0007669"/>
    <property type="project" value="InterPro"/>
</dbReference>
<dbReference type="GO" id="GO:0045947">
    <property type="term" value="P:negative regulation of translational initiation"/>
    <property type="evidence" value="ECO:0007669"/>
    <property type="project" value="UniProtKB-UniRule"/>
</dbReference>
<dbReference type="GO" id="GO:0045948">
    <property type="term" value="P:positive regulation of translational initiation"/>
    <property type="evidence" value="ECO:0007669"/>
    <property type="project" value="UniProtKB-UniRule"/>
</dbReference>
<dbReference type="GO" id="GO:0006109">
    <property type="term" value="P:regulation of carbohydrate metabolic process"/>
    <property type="evidence" value="ECO:0007669"/>
    <property type="project" value="UniProtKB-UniRule"/>
</dbReference>
<dbReference type="FunFam" id="2.60.40.4380:FF:000001">
    <property type="entry name" value="Translational regulator CsrA"/>
    <property type="match status" value="1"/>
</dbReference>
<dbReference type="Gene3D" id="2.60.40.4380">
    <property type="entry name" value="Translational regulator CsrA"/>
    <property type="match status" value="1"/>
</dbReference>
<dbReference type="HAMAP" id="MF_00167">
    <property type="entry name" value="CsrA"/>
    <property type="match status" value="1"/>
</dbReference>
<dbReference type="InterPro" id="IPR003751">
    <property type="entry name" value="CsrA"/>
</dbReference>
<dbReference type="InterPro" id="IPR036107">
    <property type="entry name" value="CsrA_sf"/>
</dbReference>
<dbReference type="NCBIfam" id="TIGR00202">
    <property type="entry name" value="csrA"/>
    <property type="match status" value="1"/>
</dbReference>
<dbReference type="NCBIfam" id="NF002469">
    <property type="entry name" value="PRK01712.1"/>
    <property type="match status" value="1"/>
</dbReference>
<dbReference type="PANTHER" id="PTHR34984">
    <property type="entry name" value="CARBON STORAGE REGULATOR"/>
    <property type="match status" value="1"/>
</dbReference>
<dbReference type="PANTHER" id="PTHR34984:SF1">
    <property type="entry name" value="CARBON STORAGE REGULATOR"/>
    <property type="match status" value="1"/>
</dbReference>
<dbReference type="Pfam" id="PF02599">
    <property type="entry name" value="CsrA"/>
    <property type="match status" value="1"/>
</dbReference>
<dbReference type="SUPFAM" id="SSF117130">
    <property type="entry name" value="CsrA-like"/>
    <property type="match status" value="1"/>
</dbReference>
<gene>
    <name evidence="1" type="primary">csrA</name>
    <name type="ordered locus">SBO_2822</name>
</gene>
<protein>
    <recommendedName>
        <fullName evidence="1">Translational regulator CsrA</fullName>
    </recommendedName>
    <alternativeName>
        <fullName evidence="1">Carbon storage regulator</fullName>
    </alternativeName>
</protein>
<accession>Q31X61</accession>
<keyword id="KW-0010">Activator</keyword>
<keyword id="KW-0963">Cytoplasm</keyword>
<keyword id="KW-0678">Repressor</keyword>
<keyword id="KW-0694">RNA-binding</keyword>
<keyword id="KW-0810">Translation regulation</keyword>
<name>CSRA_SHIBS</name>